<evidence type="ECO:0000250" key="1">
    <source>
        <dbReference type="UniProtKB" id="Q80HY2"/>
    </source>
</evidence>
<evidence type="ECO:0000255" key="2"/>
<evidence type="ECO:0000305" key="3"/>
<dbReference type="EMBL" id="M35027">
    <property type="protein sequence ID" value="AAA48004.1"/>
    <property type="molecule type" value="Genomic_DNA"/>
</dbReference>
<dbReference type="PIR" id="H42504">
    <property type="entry name" value="H42504"/>
</dbReference>
<dbReference type="SMR" id="P21092"/>
<dbReference type="Proteomes" id="UP000008269">
    <property type="component" value="Segment"/>
</dbReference>
<dbReference type="GO" id="GO:0005576">
    <property type="term" value="C:extracellular region"/>
    <property type="evidence" value="ECO:0007669"/>
    <property type="project" value="UniProtKB-SubCell"/>
</dbReference>
<dbReference type="GO" id="GO:0044165">
    <property type="term" value="C:host cell endoplasmic reticulum"/>
    <property type="evidence" value="ECO:0007669"/>
    <property type="project" value="UniProtKB-SubCell"/>
</dbReference>
<dbReference type="GO" id="GO:0085034">
    <property type="term" value="P:symbiont-mediated suppression of host NF-kappaB cascade"/>
    <property type="evidence" value="ECO:0007669"/>
    <property type="project" value="UniProtKB-KW"/>
</dbReference>
<dbReference type="InterPro" id="IPR006971">
    <property type="entry name" value="Poxvirus_M2"/>
</dbReference>
<dbReference type="Pfam" id="PF04887">
    <property type="entry name" value="Pox_M2"/>
    <property type="match status" value="1"/>
</dbReference>
<dbReference type="PIRSF" id="PIRSF015982">
    <property type="entry name" value="VAC_M2L"/>
    <property type="match status" value="1"/>
</dbReference>
<organismHost>
    <name type="scientific">Homo sapiens</name>
    <name type="common">Human</name>
    <dbReference type="NCBI Taxonomy" id="9606"/>
</organismHost>
<keyword id="KW-0244">Early protein</keyword>
<keyword id="KW-0325">Glycoprotein</keyword>
<keyword id="KW-1038">Host endoplasmic reticulum</keyword>
<keyword id="KW-0945">Host-virus interaction</keyword>
<keyword id="KW-1100">Inhibition of host NF-kappa-B by virus</keyword>
<keyword id="KW-1185">Reference proteome</keyword>
<keyword id="KW-0964">Secreted</keyword>
<keyword id="KW-0732">Signal</keyword>
<keyword id="KW-0899">Viral immunoevasion</keyword>
<gene>
    <name type="primary">OPG038</name>
    <name type="synonym">M2L</name>
</gene>
<accession>P21092</accession>
<comment type="function">
    <text evidence="1">Plays a role in immune evasion. When secreted, inhibits T-cell activation by preventing the binding of host CD80 and CD86 to soluble CTLA4 and CD28. In the infected cell, may inhibits host NF kappa B activation.</text>
</comment>
<comment type="subunit">
    <text evidence="1">Homooligomer. Interacts with host CD80 and CD86 when secreted.</text>
</comment>
<comment type="subcellular location">
    <subcellularLocation>
        <location evidence="1">Host endoplasmic reticulum</location>
    </subcellularLocation>
    <subcellularLocation>
        <location evidence="1">Secreted</location>
    </subcellularLocation>
</comment>
<comment type="induction">
    <text evidence="1">Expressed in the early phase of the viral replicative cycle.</text>
</comment>
<comment type="PTM">
    <text evidence="1">Glycosylated by host.</text>
</comment>
<comment type="similarity">
    <text evidence="3">Belongs to the orthopoxvirus OPG038 family.</text>
</comment>
<reference key="1">
    <citation type="journal article" date="1990" name="Virology">
        <title>The complete DNA sequence of vaccinia virus.</title>
        <authorList>
            <person name="Goebel S.J."/>
            <person name="Johnson G.P."/>
            <person name="Perkus M.E."/>
            <person name="Davis S.W."/>
            <person name="Winslow J.P."/>
            <person name="Paoletti E."/>
        </authorList>
    </citation>
    <scope>NUCLEOTIDE SEQUENCE [LARGE SCALE GENOMIC DNA]</scope>
</reference>
<reference key="2">
    <citation type="journal article" date="1990" name="Virology">
        <title>Appendix to 'The complete DNA sequence of vaccinia virus'.</title>
        <authorList>
            <person name="Goebel S.J."/>
            <person name="Johnson G.P."/>
            <person name="Perkus M.E."/>
            <person name="Davis S.W."/>
            <person name="Winslow J.P."/>
            <person name="Paoletti E."/>
        </authorList>
    </citation>
    <scope>NUCLEOTIDE SEQUENCE [LARGE SCALE GENOMIC DNA]</scope>
</reference>
<organism>
    <name type="scientific">Vaccinia virus (strain Copenhagen)</name>
    <name type="common">VACV</name>
    <dbReference type="NCBI Taxonomy" id="10249"/>
    <lineage>
        <taxon>Viruses</taxon>
        <taxon>Varidnaviria</taxon>
        <taxon>Bamfordvirae</taxon>
        <taxon>Nucleocytoviricota</taxon>
        <taxon>Pokkesviricetes</taxon>
        <taxon>Chitovirales</taxon>
        <taxon>Poxviridae</taxon>
        <taxon>Chordopoxvirinae</taxon>
        <taxon>Orthopoxvirus</taxon>
        <taxon>Vaccinia virus</taxon>
    </lineage>
</organism>
<feature type="signal peptide" evidence="2">
    <location>
        <begin position="1"/>
        <end position="17"/>
    </location>
</feature>
<feature type="chain" id="PRO_0000099630" description="Early protein OPG038">
    <location>
        <begin position="18"/>
        <end position="220"/>
    </location>
</feature>
<sequence length="220" mass="25108">MVYKLVLLFCIASLGYSVEYKNTICPPRQDYRYWYFAAELTIGVNYDINSTIIGECHMSESYIDRNANIVLTGYGLEINMTIMDTDQRFVAAAEGVGKDNKLSVLLFTTQRLDKVHHNISVTITCMEMNCGTTKYDSDLPESIHKSSSCDITINGSCVTCVNLETDPTKINPHYLHPKDKYLYHNSEYGMRGSYGVTFIDELNQCLLDIKELSYDICYRE</sequence>
<name>PG038_VACCC</name>
<protein>
    <recommendedName>
        <fullName>Early protein OPG038</fullName>
    </recommendedName>
    <alternativeName>
        <fullName>Protein M2</fullName>
    </alternativeName>
</protein>
<proteinExistence type="inferred from homology"/>